<reference key="1">
    <citation type="journal article" date="2007" name="Nat. Biotechnol.">
        <title>Comparative analysis of the complete genome sequence of the plant growth-promoting bacterium Bacillus amyloliquefaciens FZB42.</title>
        <authorList>
            <person name="Chen X.H."/>
            <person name="Koumoutsi A."/>
            <person name="Scholz R."/>
            <person name="Eisenreich A."/>
            <person name="Schneider K."/>
            <person name="Heinemeyer I."/>
            <person name="Morgenstern B."/>
            <person name="Voss B."/>
            <person name="Hess W.R."/>
            <person name="Reva O."/>
            <person name="Junge H."/>
            <person name="Voigt B."/>
            <person name="Jungblut P.R."/>
            <person name="Vater J."/>
            <person name="Suessmuth R."/>
            <person name="Liesegang H."/>
            <person name="Strittmatter A."/>
            <person name="Gottschalk G."/>
            <person name="Borriss R."/>
        </authorList>
    </citation>
    <scope>NUCLEOTIDE SEQUENCE [LARGE SCALE GENOMIC DNA]</scope>
    <source>
        <strain>DSM 23117 / BGSC 10A6 / LMG 26770 / FZB42</strain>
    </source>
</reference>
<sequence>MRQSLTLIPTLREVPADAEAKSHKLLLRAGFIRQNTSGVYSYMPLAYRVIQNIQKIVREEMEKINAVEMLMPALQQAETWQESGRWYTYGPELMRLKDRHGREFALGATHEEVITSLVRDEVKSYKRLPLTLYQIQSKFRDEKRPRFGLLRGREFIMKDAYSFHASEESLEETYQNMYGAYSSIFARCELNVRPVIADSGAMGGKDTHEFMALSEIGEDTIAYSDGSSYAANTEMAEVVMNSEPSDETPEALEKIDTPNVKSIEELASFLQIEPSACIKSMLFKADDRFVLVLVRGDHEVNDVKVKNLLNAEVVELASHEEVAEKLGTEPGFAGPIGAAGDIEIYADQAVKVMVNAVSGANEKDRHYRNVNIERDASVKAYADLRIIQEGDPSPDGKGTIRFAEGIEVGQVFKLGTRYSEAMNATYLDENGRAQPMLMGCYGIGVSRTLSAIAEQHHDEKGLIWPKSVAPYDLHILALNMKNEAQKELAEQLYGKFQAEGYEVLYDDRAERAGVKFADSDLIGLPIRITVGKRADEGIVEVKIRKTGESAEVSVDELSEFIKTK</sequence>
<feature type="chain" id="PRO_1000069120" description="Proline--tRNA ligase">
    <location>
        <begin position="1"/>
        <end position="564"/>
    </location>
</feature>
<dbReference type="EC" id="6.1.1.15" evidence="1"/>
<dbReference type="EMBL" id="CP000560">
    <property type="protein sequence ID" value="ABS74004.1"/>
    <property type="molecule type" value="Genomic_DNA"/>
</dbReference>
<dbReference type="RefSeq" id="WP_007611460.1">
    <property type="nucleotide sequence ID" value="NC_009725.2"/>
</dbReference>
<dbReference type="SMR" id="A7Z4S8"/>
<dbReference type="GeneID" id="93080774"/>
<dbReference type="KEGG" id="bay:RBAM_016410"/>
<dbReference type="HOGENOM" id="CLU_016739_0_0_9"/>
<dbReference type="Proteomes" id="UP000001120">
    <property type="component" value="Chromosome"/>
</dbReference>
<dbReference type="GO" id="GO:0005829">
    <property type="term" value="C:cytosol"/>
    <property type="evidence" value="ECO:0007669"/>
    <property type="project" value="TreeGrafter"/>
</dbReference>
<dbReference type="GO" id="GO:0002161">
    <property type="term" value="F:aminoacyl-tRNA deacylase activity"/>
    <property type="evidence" value="ECO:0007669"/>
    <property type="project" value="InterPro"/>
</dbReference>
<dbReference type="GO" id="GO:0005524">
    <property type="term" value="F:ATP binding"/>
    <property type="evidence" value="ECO:0007669"/>
    <property type="project" value="UniProtKB-UniRule"/>
</dbReference>
<dbReference type="GO" id="GO:0140096">
    <property type="term" value="F:catalytic activity, acting on a protein"/>
    <property type="evidence" value="ECO:0007669"/>
    <property type="project" value="UniProtKB-ARBA"/>
</dbReference>
<dbReference type="GO" id="GO:0004827">
    <property type="term" value="F:proline-tRNA ligase activity"/>
    <property type="evidence" value="ECO:0007669"/>
    <property type="project" value="UniProtKB-UniRule"/>
</dbReference>
<dbReference type="GO" id="GO:0016740">
    <property type="term" value="F:transferase activity"/>
    <property type="evidence" value="ECO:0007669"/>
    <property type="project" value="UniProtKB-ARBA"/>
</dbReference>
<dbReference type="GO" id="GO:0006433">
    <property type="term" value="P:prolyl-tRNA aminoacylation"/>
    <property type="evidence" value="ECO:0007669"/>
    <property type="project" value="UniProtKB-UniRule"/>
</dbReference>
<dbReference type="CDD" id="cd04334">
    <property type="entry name" value="ProRS-INS"/>
    <property type="match status" value="1"/>
</dbReference>
<dbReference type="CDD" id="cd00861">
    <property type="entry name" value="ProRS_anticodon_short"/>
    <property type="match status" value="1"/>
</dbReference>
<dbReference type="CDD" id="cd00779">
    <property type="entry name" value="ProRS_core_prok"/>
    <property type="match status" value="1"/>
</dbReference>
<dbReference type="FunFam" id="3.30.930.10:FF:000015">
    <property type="entry name" value="Proline--tRNA ligase"/>
    <property type="match status" value="1"/>
</dbReference>
<dbReference type="FunFam" id="3.30.930.10:FF:000043">
    <property type="entry name" value="Proline--tRNA ligase"/>
    <property type="match status" value="1"/>
</dbReference>
<dbReference type="FunFam" id="3.40.50.800:FF:000011">
    <property type="entry name" value="Proline--tRNA ligase"/>
    <property type="match status" value="1"/>
</dbReference>
<dbReference type="Gene3D" id="3.40.50.800">
    <property type="entry name" value="Anticodon-binding domain"/>
    <property type="match status" value="1"/>
</dbReference>
<dbReference type="Gene3D" id="3.30.930.10">
    <property type="entry name" value="Bira Bifunctional Protein, Domain 2"/>
    <property type="match status" value="2"/>
</dbReference>
<dbReference type="HAMAP" id="MF_01569">
    <property type="entry name" value="Pro_tRNA_synth_type1"/>
    <property type="match status" value="1"/>
</dbReference>
<dbReference type="InterPro" id="IPR002314">
    <property type="entry name" value="aa-tRNA-synt_IIb"/>
</dbReference>
<dbReference type="InterPro" id="IPR006195">
    <property type="entry name" value="aa-tRNA-synth_II"/>
</dbReference>
<dbReference type="InterPro" id="IPR045864">
    <property type="entry name" value="aa-tRNA-synth_II/BPL/LPL"/>
</dbReference>
<dbReference type="InterPro" id="IPR004154">
    <property type="entry name" value="Anticodon-bd"/>
</dbReference>
<dbReference type="InterPro" id="IPR036621">
    <property type="entry name" value="Anticodon-bd_dom_sf"/>
</dbReference>
<dbReference type="InterPro" id="IPR002316">
    <property type="entry name" value="Pro-tRNA-ligase_IIa"/>
</dbReference>
<dbReference type="InterPro" id="IPR004500">
    <property type="entry name" value="Pro-tRNA-synth_IIa_bac-type"/>
</dbReference>
<dbReference type="InterPro" id="IPR023717">
    <property type="entry name" value="Pro-tRNA-Synthase_IIa_type1"/>
</dbReference>
<dbReference type="InterPro" id="IPR050062">
    <property type="entry name" value="Pro-tRNA_synthetase"/>
</dbReference>
<dbReference type="InterPro" id="IPR044140">
    <property type="entry name" value="ProRS_anticodon_short"/>
</dbReference>
<dbReference type="InterPro" id="IPR033730">
    <property type="entry name" value="ProRS_core_prok"/>
</dbReference>
<dbReference type="InterPro" id="IPR036754">
    <property type="entry name" value="YbaK/aa-tRNA-synt-asso_dom_sf"/>
</dbReference>
<dbReference type="InterPro" id="IPR007214">
    <property type="entry name" value="YbaK/aa-tRNA-synth-assoc-dom"/>
</dbReference>
<dbReference type="NCBIfam" id="NF006625">
    <property type="entry name" value="PRK09194.1"/>
    <property type="match status" value="1"/>
</dbReference>
<dbReference type="NCBIfam" id="TIGR00409">
    <property type="entry name" value="proS_fam_II"/>
    <property type="match status" value="1"/>
</dbReference>
<dbReference type="PANTHER" id="PTHR42753">
    <property type="entry name" value="MITOCHONDRIAL RIBOSOME PROTEIN L39/PROLYL-TRNA LIGASE FAMILY MEMBER"/>
    <property type="match status" value="1"/>
</dbReference>
<dbReference type="PANTHER" id="PTHR42753:SF2">
    <property type="entry name" value="PROLINE--TRNA LIGASE"/>
    <property type="match status" value="1"/>
</dbReference>
<dbReference type="Pfam" id="PF03129">
    <property type="entry name" value="HGTP_anticodon"/>
    <property type="match status" value="1"/>
</dbReference>
<dbReference type="Pfam" id="PF00587">
    <property type="entry name" value="tRNA-synt_2b"/>
    <property type="match status" value="1"/>
</dbReference>
<dbReference type="Pfam" id="PF04073">
    <property type="entry name" value="tRNA_edit"/>
    <property type="match status" value="1"/>
</dbReference>
<dbReference type="PIRSF" id="PIRSF001535">
    <property type="entry name" value="ProRS_1"/>
    <property type="match status" value="1"/>
</dbReference>
<dbReference type="PRINTS" id="PR01046">
    <property type="entry name" value="TRNASYNTHPRO"/>
</dbReference>
<dbReference type="SUPFAM" id="SSF52954">
    <property type="entry name" value="Class II aaRS ABD-related"/>
    <property type="match status" value="1"/>
</dbReference>
<dbReference type="SUPFAM" id="SSF55681">
    <property type="entry name" value="Class II aaRS and biotin synthetases"/>
    <property type="match status" value="1"/>
</dbReference>
<dbReference type="SUPFAM" id="SSF55826">
    <property type="entry name" value="YbaK/ProRS associated domain"/>
    <property type="match status" value="1"/>
</dbReference>
<dbReference type="PROSITE" id="PS50862">
    <property type="entry name" value="AA_TRNA_LIGASE_II"/>
    <property type="match status" value="1"/>
</dbReference>
<organism>
    <name type="scientific">Bacillus velezensis (strain DSM 23117 / BGSC 10A6 / LMG 26770 / FZB42)</name>
    <name type="common">Bacillus amyloliquefaciens subsp. plantarum</name>
    <dbReference type="NCBI Taxonomy" id="326423"/>
    <lineage>
        <taxon>Bacteria</taxon>
        <taxon>Bacillati</taxon>
        <taxon>Bacillota</taxon>
        <taxon>Bacilli</taxon>
        <taxon>Bacillales</taxon>
        <taxon>Bacillaceae</taxon>
        <taxon>Bacillus</taxon>
        <taxon>Bacillus amyloliquefaciens group</taxon>
    </lineage>
</organism>
<name>SYP_BACVZ</name>
<evidence type="ECO:0000255" key="1">
    <source>
        <dbReference type="HAMAP-Rule" id="MF_01569"/>
    </source>
</evidence>
<keyword id="KW-0030">Aminoacyl-tRNA synthetase</keyword>
<keyword id="KW-0067">ATP-binding</keyword>
<keyword id="KW-0963">Cytoplasm</keyword>
<keyword id="KW-0436">Ligase</keyword>
<keyword id="KW-0547">Nucleotide-binding</keyword>
<keyword id="KW-0648">Protein biosynthesis</keyword>
<gene>
    <name evidence="1" type="primary">proS</name>
    <name type="ordered locus">RBAM_016410</name>
</gene>
<protein>
    <recommendedName>
        <fullName evidence="1">Proline--tRNA ligase</fullName>
        <ecNumber evidence="1">6.1.1.15</ecNumber>
    </recommendedName>
    <alternativeName>
        <fullName evidence="1">Prolyl-tRNA synthetase</fullName>
        <shortName evidence="1">ProRS</shortName>
    </alternativeName>
</protein>
<comment type="function">
    <text evidence="1">Catalyzes the attachment of proline to tRNA(Pro) in a two-step reaction: proline is first activated by ATP to form Pro-AMP and then transferred to the acceptor end of tRNA(Pro). As ProRS can inadvertently accommodate and process non-cognate amino acids such as alanine and cysteine, to avoid such errors it has two additional distinct editing activities against alanine. One activity is designated as 'pretransfer' editing and involves the tRNA(Pro)-independent hydrolysis of activated Ala-AMP. The other activity is designated 'posttransfer' editing and involves deacylation of mischarged Ala-tRNA(Pro). The misacylated Cys-tRNA(Pro) is not edited by ProRS.</text>
</comment>
<comment type="catalytic activity">
    <reaction evidence="1">
        <text>tRNA(Pro) + L-proline + ATP = L-prolyl-tRNA(Pro) + AMP + diphosphate</text>
        <dbReference type="Rhea" id="RHEA:14305"/>
        <dbReference type="Rhea" id="RHEA-COMP:9700"/>
        <dbReference type="Rhea" id="RHEA-COMP:9702"/>
        <dbReference type="ChEBI" id="CHEBI:30616"/>
        <dbReference type="ChEBI" id="CHEBI:33019"/>
        <dbReference type="ChEBI" id="CHEBI:60039"/>
        <dbReference type="ChEBI" id="CHEBI:78442"/>
        <dbReference type="ChEBI" id="CHEBI:78532"/>
        <dbReference type="ChEBI" id="CHEBI:456215"/>
        <dbReference type="EC" id="6.1.1.15"/>
    </reaction>
</comment>
<comment type="subunit">
    <text evidence="1">Homodimer.</text>
</comment>
<comment type="subcellular location">
    <subcellularLocation>
        <location evidence="1">Cytoplasm</location>
    </subcellularLocation>
</comment>
<comment type="domain">
    <text evidence="1">Consists of three domains: the N-terminal catalytic domain, the editing domain and the C-terminal anticodon-binding domain.</text>
</comment>
<comment type="similarity">
    <text evidence="1">Belongs to the class-II aminoacyl-tRNA synthetase family. ProS type 1 subfamily.</text>
</comment>
<accession>A7Z4S8</accession>
<proteinExistence type="inferred from homology"/>